<organism>
    <name type="scientific">Syntrophomonas wolfei subsp. wolfei (strain DSM 2245B / Goettingen)</name>
    <dbReference type="NCBI Taxonomy" id="335541"/>
    <lineage>
        <taxon>Bacteria</taxon>
        <taxon>Bacillati</taxon>
        <taxon>Bacillota</taxon>
        <taxon>Clostridia</taxon>
        <taxon>Eubacteriales</taxon>
        <taxon>Syntrophomonadaceae</taxon>
        <taxon>Syntrophomonas</taxon>
    </lineage>
</organism>
<accession>Q0AVM1</accession>
<sequence>MAYENIILEKEEKLAVLYINRPKAMNALNKDTLLEIKDAVTAVNDDPAVELLIITGSGDKSFVAGADIAFMQNLSAMEAREFGALGQKVFRLIEAMEKPVIAAVNGFALGGGCELAMCCDFRIAASNAKFGQPEVGLGITPGFGGTQRLPRLVGPGMAKQLLYTADVINADEAFRIGLVNKVVQPEELLPEVKKIAGRILSKGQLAVRLSKAAANEGMQTDIDRAMSIEADAFGLCFATQDQKEGMTAFLEKRKANFISK</sequence>
<feature type="chain" id="PRO_0000442215" description="Crotonyl-CoA hydratase">
    <location>
        <begin position="1"/>
        <end position="260"/>
    </location>
</feature>
<feature type="active site" description="Nucleophile" evidence="2">
    <location>
        <position position="114"/>
    </location>
</feature>
<feature type="active site" description="Proton acceptor" evidence="2">
    <location>
        <position position="134"/>
    </location>
</feature>
<keyword id="KW-0963">Cytoplasm</keyword>
<keyword id="KW-0276">Fatty acid metabolism</keyword>
<keyword id="KW-0443">Lipid metabolism</keyword>
<keyword id="KW-0456">Lyase</keyword>
<keyword id="KW-1185">Reference proteome</keyword>
<name>CRCH_SYNWW</name>
<gene>
    <name evidence="7" type="ordered locus">Swol_1936</name>
</gene>
<protein>
    <recommendedName>
        <fullName evidence="4">Crotonyl-CoA hydratase</fullName>
        <ecNumber evidence="6">4.2.1.150</ecNumber>
    </recommendedName>
</protein>
<dbReference type="EC" id="4.2.1.150" evidence="6"/>
<dbReference type="EMBL" id="CP000448">
    <property type="protein sequence ID" value="ABI69233.1"/>
    <property type="molecule type" value="Genomic_DNA"/>
</dbReference>
<dbReference type="RefSeq" id="WP_011641326.1">
    <property type="nucleotide sequence ID" value="NC_008346.1"/>
</dbReference>
<dbReference type="SMR" id="Q0AVM1"/>
<dbReference type="STRING" id="335541.Swol_1936"/>
<dbReference type="KEGG" id="swo:Swol_1936"/>
<dbReference type="eggNOG" id="COG1024">
    <property type="taxonomic scope" value="Bacteria"/>
</dbReference>
<dbReference type="HOGENOM" id="CLU_009834_7_6_9"/>
<dbReference type="OrthoDB" id="9775794at2"/>
<dbReference type="UniPathway" id="UPA00863"/>
<dbReference type="Proteomes" id="UP000001968">
    <property type="component" value="Chromosome"/>
</dbReference>
<dbReference type="GO" id="GO:0005737">
    <property type="term" value="C:cytoplasm"/>
    <property type="evidence" value="ECO:0007669"/>
    <property type="project" value="UniProtKB-SubCell"/>
</dbReference>
<dbReference type="GO" id="GO:0120092">
    <property type="term" value="F:crotonyl-CoA hydratase activity"/>
    <property type="evidence" value="ECO:0007669"/>
    <property type="project" value="RHEA"/>
</dbReference>
<dbReference type="GO" id="GO:0019605">
    <property type="term" value="P:butyrate metabolic process"/>
    <property type="evidence" value="ECO:0007669"/>
    <property type="project" value="UniProtKB-UniPathway"/>
</dbReference>
<dbReference type="GO" id="GO:0006635">
    <property type="term" value="P:fatty acid beta-oxidation"/>
    <property type="evidence" value="ECO:0007669"/>
    <property type="project" value="TreeGrafter"/>
</dbReference>
<dbReference type="CDD" id="cd06558">
    <property type="entry name" value="crotonase-like"/>
    <property type="match status" value="1"/>
</dbReference>
<dbReference type="FunFam" id="3.90.226.10:FF:000009">
    <property type="entry name" value="Carnitinyl-CoA dehydratase"/>
    <property type="match status" value="1"/>
</dbReference>
<dbReference type="FunFam" id="1.10.12.10:FF:000001">
    <property type="entry name" value="Probable enoyl-CoA hydratase, mitochondrial"/>
    <property type="match status" value="1"/>
</dbReference>
<dbReference type="Gene3D" id="3.90.226.10">
    <property type="entry name" value="2-enoyl-CoA Hydratase, Chain A, domain 1"/>
    <property type="match status" value="1"/>
</dbReference>
<dbReference type="Gene3D" id="1.10.12.10">
    <property type="entry name" value="Lyase 2-enoyl-coa Hydratase, Chain A, domain 2"/>
    <property type="match status" value="1"/>
</dbReference>
<dbReference type="InterPro" id="IPR029045">
    <property type="entry name" value="ClpP/crotonase-like_dom_sf"/>
</dbReference>
<dbReference type="InterPro" id="IPR018376">
    <property type="entry name" value="Enoyl-CoA_hyd/isom_CS"/>
</dbReference>
<dbReference type="InterPro" id="IPR001753">
    <property type="entry name" value="Enoyl-CoA_hydra/iso"/>
</dbReference>
<dbReference type="InterPro" id="IPR014748">
    <property type="entry name" value="Enoyl-CoA_hydra_C"/>
</dbReference>
<dbReference type="NCBIfam" id="NF004475">
    <property type="entry name" value="PRK05809.1"/>
    <property type="match status" value="1"/>
</dbReference>
<dbReference type="PANTHER" id="PTHR11941:SF54">
    <property type="entry name" value="ENOYL-COA HYDRATASE, MITOCHONDRIAL"/>
    <property type="match status" value="1"/>
</dbReference>
<dbReference type="PANTHER" id="PTHR11941">
    <property type="entry name" value="ENOYL-COA HYDRATASE-RELATED"/>
    <property type="match status" value="1"/>
</dbReference>
<dbReference type="Pfam" id="PF00378">
    <property type="entry name" value="ECH_1"/>
    <property type="match status" value="1"/>
</dbReference>
<dbReference type="SUPFAM" id="SSF52096">
    <property type="entry name" value="ClpP/crotonase"/>
    <property type="match status" value="1"/>
</dbReference>
<dbReference type="PROSITE" id="PS00166">
    <property type="entry name" value="ENOYL_COA_HYDRATASE"/>
    <property type="match status" value="1"/>
</dbReference>
<comment type="function">
    <text evidence="6">Involved in syntrophic growth of S.wolfei with butyrate, as part of the butyrate oxidation pathway. Probably catalyzes the hydration of crotonyl-CoA to 3-hydroxybutyryl-CoA.</text>
</comment>
<comment type="catalytic activity">
    <reaction evidence="6">
        <text>3-hydroxybutanoyl-CoA = (2E)-butenoyl-CoA + H2O</text>
        <dbReference type="Rhea" id="RHEA:45584"/>
        <dbReference type="ChEBI" id="CHEBI:15377"/>
        <dbReference type="ChEBI" id="CHEBI:57332"/>
        <dbReference type="ChEBI" id="CHEBI:78611"/>
    </reaction>
</comment>
<comment type="catalytic activity">
    <reaction evidence="6">
        <text>a short-chain (3S)-3-hydroxyacyl-CoA = a short-chain (2E)-enoyl-CoA + H2O</text>
        <dbReference type="Rhea" id="RHEA:52664"/>
        <dbReference type="ChEBI" id="CHEBI:15377"/>
        <dbReference type="ChEBI" id="CHEBI:87488"/>
        <dbReference type="ChEBI" id="CHEBI:136760"/>
        <dbReference type="EC" id="4.2.1.150"/>
    </reaction>
</comment>
<comment type="pathway">
    <text evidence="6">Lipid metabolism; butanoate metabolism.</text>
</comment>
<comment type="subunit">
    <text evidence="1">Homotetramer.</text>
</comment>
<comment type="subcellular location">
    <subcellularLocation>
        <location evidence="3">Cytoplasm</location>
    </subcellularLocation>
</comment>
<comment type="induction">
    <text evidence="3">Highly expressed during syntrophic growth with butyrate (at protein level). Seems to be constitutively expressed.</text>
</comment>
<comment type="similarity">
    <text evidence="5">Belongs to the enoyl-CoA hydratase/isomerase family.</text>
</comment>
<proteinExistence type="evidence at protein level"/>
<evidence type="ECO:0000250" key="1">
    <source>
        <dbReference type="UniProtKB" id="P52046"/>
    </source>
</evidence>
<evidence type="ECO:0000250" key="2">
    <source>
        <dbReference type="UniProtKB" id="Q5LLW6"/>
    </source>
</evidence>
<evidence type="ECO:0000269" key="3">
    <source>
    </source>
</evidence>
<evidence type="ECO:0000303" key="4">
    <source>
    </source>
</evidence>
<evidence type="ECO:0000305" key="5"/>
<evidence type="ECO:0000305" key="6">
    <source>
    </source>
</evidence>
<evidence type="ECO:0000312" key="7">
    <source>
        <dbReference type="EMBL" id="ABI69233.1"/>
    </source>
</evidence>
<reference key="1">
    <citation type="journal article" date="2010" name="Environ. Microbiol.">
        <title>The genome of Syntrophomonas wolfei: new insights into syntrophic metabolism and biohydrogen production.</title>
        <authorList>
            <person name="Sieber J.R."/>
            <person name="Sims D.R."/>
            <person name="Han C."/>
            <person name="Kim E."/>
            <person name="Lykidis A."/>
            <person name="Lapidus A.L."/>
            <person name="McDonnald E."/>
            <person name="Rohlin L."/>
            <person name="Culley D.E."/>
            <person name="Gunsalus R."/>
            <person name="McInerney M.J."/>
        </authorList>
    </citation>
    <scope>NUCLEOTIDE SEQUENCE [LARGE SCALE GENOMIC DNA]</scope>
    <source>
        <strain>DSM 2245B / Goettingen</strain>
    </source>
</reference>
<reference key="2">
    <citation type="journal article" date="2013" name="PLoS ONE">
        <title>A proteomic view at the biochemistry of syntrophic butyrate oxidation in Syntrophomonas wolfei.</title>
        <authorList>
            <person name="Schmidt A."/>
            <person name="Mueller N."/>
            <person name="Schink B."/>
            <person name="Schleheck D."/>
        </authorList>
    </citation>
    <scope>IDENTIFICATION BY MASS SPECTROMETRY</scope>
    <scope>INDUCTION</scope>
    <scope>SUBCELLULAR LOCATION</scope>
    <scope>FUNCTION</scope>
    <scope>PATHWAY</scope>
</reference>